<name>TEFM_MOUSE</name>
<protein>
    <recommendedName>
        <fullName>Transcription elongation factor, mitochondrial</fullName>
    </recommendedName>
</protein>
<comment type="function">
    <text evidence="1">Transcription elongation factor which increases mitochondrial RNA polymerase processivity. Regulates transcription of the mitochondrial genome, including genes important for the oxidative phosphorylation machinery (By similarity).</text>
</comment>
<comment type="subunit">
    <text evidence="1">Interacts with POLRMT.</text>
</comment>
<comment type="subcellular location">
    <subcellularLocation>
        <location evidence="1">Mitochondrion matrix</location>
    </subcellularLocation>
    <subcellularLocation>
        <location evidence="1">Mitochondrion matrix</location>
        <location evidence="1">Mitochondrion nucleoid</location>
    </subcellularLocation>
</comment>
<comment type="similarity">
    <text evidence="3">Belongs to the TEFM family.</text>
</comment>
<organism>
    <name type="scientific">Mus musculus</name>
    <name type="common">Mouse</name>
    <dbReference type="NCBI Taxonomy" id="10090"/>
    <lineage>
        <taxon>Eukaryota</taxon>
        <taxon>Metazoa</taxon>
        <taxon>Chordata</taxon>
        <taxon>Craniata</taxon>
        <taxon>Vertebrata</taxon>
        <taxon>Euteleostomi</taxon>
        <taxon>Mammalia</taxon>
        <taxon>Eutheria</taxon>
        <taxon>Euarchontoglires</taxon>
        <taxon>Glires</taxon>
        <taxon>Rodentia</taxon>
        <taxon>Myomorpha</taxon>
        <taxon>Muroidea</taxon>
        <taxon>Muridae</taxon>
        <taxon>Murinae</taxon>
        <taxon>Mus</taxon>
        <taxon>Mus</taxon>
    </lineage>
</organism>
<evidence type="ECO:0000250" key="1">
    <source>
        <dbReference type="UniProtKB" id="Q96QE5"/>
    </source>
</evidence>
<evidence type="ECO:0000255" key="2"/>
<evidence type="ECO:0000305" key="3"/>
<feature type="transit peptide" description="Mitochondrion" evidence="2">
    <location>
        <begin position="1"/>
        <end position="39"/>
    </location>
</feature>
<feature type="chain" id="PRO_0000406330" description="Transcription elongation factor, mitochondrial">
    <location>
        <begin position="40"/>
        <end position="364"/>
    </location>
</feature>
<dbReference type="EMBL" id="AK146639">
    <property type="protein sequence ID" value="BAE27323.1"/>
    <property type="molecule type" value="mRNA"/>
</dbReference>
<dbReference type="EMBL" id="AL663057">
    <property type="status" value="NOT_ANNOTATED_CDS"/>
    <property type="molecule type" value="Genomic_DNA"/>
</dbReference>
<dbReference type="CCDS" id="CCDS36241.1"/>
<dbReference type="RefSeq" id="NP_899098.2">
    <property type="nucleotide sequence ID" value="NM_183275.2"/>
</dbReference>
<dbReference type="SMR" id="Q5SSK3"/>
<dbReference type="BioGRID" id="212921">
    <property type="interactions" value="2"/>
</dbReference>
<dbReference type="FunCoup" id="Q5SSK3">
    <property type="interactions" value="1240"/>
</dbReference>
<dbReference type="STRING" id="10090.ENSMUSP00000059304"/>
<dbReference type="PhosphoSitePlus" id="Q5SSK3"/>
<dbReference type="SwissPalm" id="Q5SSK3"/>
<dbReference type="PaxDb" id="10090-ENSMUSP00000059304"/>
<dbReference type="PeptideAtlas" id="Q5SSK3"/>
<dbReference type="ProteomicsDB" id="263161"/>
<dbReference type="Pumba" id="Q5SSK3"/>
<dbReference type="Antibodypedia" id="7311">
    <property type="antibodies" value="98 antibodies from 19 providers"/>
</dbReference>
<dbReference type="DNASU" id="68550"/>
<dbReference type="Ensembl" id="ENSMUST00000050207.10">
    <property type="protein sequence ID" value="ENSMUSP00000059304.10"/>
    <property type="gene ID" value="ENSMUSG00000046909.10"/>
</dbReference>
<dbReference type="GeneID" id="68550"/>
<dbReference type="KEGG" id="mmu:68550"/>
<dbReference type="UCSC" id="uc007klj.1">
    <property type="organism name" value="mouse"/>
</dbReference>
<dbReference type="AGR" id="MGI:1915800"/>
<dbReference type="CTD" id="79736"/>
<dbReference type="MGI" id="MGI:1915800">
    <property type="gene designation" value="Tefm"/>
</dbReference>
<dbReference type="VEuPathDB" id="HostDB:ENSMUSG00000046909"/>
<dbReference type="eggNOG" id="ENOG502QPVB">
    <property type="taxonomic scope" value="Eukaryota"/>
</dbReference>
<dbReference type="GeneTree" id="ENSGT00390000010581"/>
<dbReference type="HOGENOM" id="CLU_066790_0_0_1"/>
<dbReference type="InParanoid" id="Q5SSK3"/>
<dbReference type="OMA" id="ESPQMAQ"/>
<dbReference type="OrthoDB" id="5949570at2759"/>
<dbReference type="PhylomeDB" id="Q5SSK3"/>
<dbReference type="TreeFam" id="TF325413"/>
<dbReference type="BioGRID-ORCS" id="68550">
    <property type="hits" value="24 hits in 76 CRISPR screens"/>
</dbReference>
<dbReference type="ChiTaRS" id="Tefm">
    <property type="organism name" value="mouse"/>
</dbReference>
<dbReference type="PRO" id="PR:Q5SSK3"/>
<dbReference type="Proteomes" id="UP000000589">
    <property type="component" value="Chromosome 11"/>
</dbReference>
<dbReference type="RNAct" id="Q5SSK3">
    <property type="molecule type" value="protein"/>
</dbReference>
<dbReference type="Bgee" id="ENSMUSG00000046909">
    <property type="expression patterns" value="Expressed in intercostal muscle and 204 other cell types or tissues"/>
</dbReference>
<dbReference type="ExpressionAtlas" id="Q5SSK3">
    <property type="expression patterns" value="baseline and differential"/>
</dbReference>
<dbReference type="GO" id="GO:0005759">
    <property type="term" value="C:mitochondrial matrix"/>
    <property type="evidence" value="ECO:0000250"/>
    <property type="project" value="UniProtKB"/>
</dbReference>
<dbReference type="GO" id="GO:0042645">
    <property type="term" value="C:mitochondrial nucleoid"/>
    <property type="evidence" value="ECO:0000250"/>
    <property type="project" value="UniProtKB"/>
</dbReference>
<dbReference type="GO" id="GO:1990904">
    <property type="term" value="C:ribonucleoprotein complex"/>
    <property type="evidence" value="ECO:0000250"/>
    <property type="project" value="UniProtKB"/>
</dbReference>
<dbReference type="GO" id="GO:0003676">
    <property type="term" value="F:nucleic acid binding"/>
    <property type="evidence" value="ECO:0007669"/>
    <property type="project" value="InterPro"/>
</dbReference>
<dbReference type="GO" id="GO:0003711">
    <property type="term" value="F:transcription elongation factor activity"/>
    <property type="evidence" value="ECO:0000250"/>
    <property type="project" value="UniProtKB"/>
</dbReference>
<dbReference type="GO" id="GO:1903109">
    <property type="term" value="P:positive regulation of mitochondrial transcription"/>
    <property type="evidence" value="ECO:0000250"/>
    <property type="project" value="UniProtKB"/>
</dbReference>
<dbReference type="GO" id="GO:0002082">
    <property type="term" value="P:regulation of oxidative phosphorylation"/>
    <property type="evidence" value="ECO:0007669"/>
    <property type="project" value="Ensembl"/>
</dbReference>
<dbReference type="GO" id="GO:0006392">
    <property type="term" value="P:transcription elongation by mitochondrial RNA polymerase"/>
    <property type="evidence" value="ECO:0007669"/>
    <property type="project" value="InterPro"/>
</dbReference>
<dbReference type="FunFam" id="1.10.150.280:FF:000004">
    <property type="entry name" value="Transcription elongation factor, mitochondrial"/>
    <property type="match status" value="1"/>
</dbReference>
<dbReference type="FunFam" id="3.30.420.10:FF:000095">
    <property type="entry name" value="Transcription elongation factor, mitochondrial"/>
    <property type="match status" value="1"/>
</dbReference>
<dbReference type="Gene3D" id="3.30.420.10">
    <property type="entry name" value="Ribonuclease H-like superfamily/Ribonuclease H"/>
    <property type="match status" value="1"/>
</dbReference>
<dbReference type="InterPro" id="IPR036397">
    <property type="entry name" value="RNaseH_sf"/>
</dbReference>
<dbReference type="InterPro" id="IPR010994">
    <property type="entry name" value="RuvA_2-like"/>
</dbReference>
<dbReference type="InterPro" id="IPR039150">
    <property type="entry name" value="TEFM"/>
</dbReference>
<dbReference type="PANTHER" id="PTHR21053">
    <property type="entry name" value="TRANSCRIPTION ELONGATION FACTOR, MITOCHONDRIAL"/>
    <property type="match status" value="1"/>
</dbReference>
<dbReference type="PANTHER" id="PTHR21053:SF2">
    <property type="entry name" value="TRANSCRIPTION ELONGATION FACTOR, MITOCHONDRIAL"/>
    <property type="match status" value="1"/>
</dbReference>
<dbReference type="Pfam" id="PF12836">
    <property type="entry name" value="HHH_3"/>
    <property type="match status" value="1"/>
</dbReference>
<dbReference type="SUPFAM" id="SSF47781">
    <property type="entry name" value="RuvA domain 2-like"/>
    <property type="match status" value="1"/>
</dbReference>
<sequence length="364" mass="41874">MAWRTNLACLIKAGGRRWFPVPEYSSLPPVLNNTCSVRKSTAPEKRVASVAACDTDGKEPGNPLDRLFSLEQQASILQVLNTASDKELEAFRLLRGRKSVNIVEHRKKFGPFQRLENLIDVPLIQYKTAVEVCNSILCPENRRRKKSQEKWLLRKFIKPGVEQERLKAVKSIVSIVFGTRRIAWAHLDRRPTVLDWQQTECWKLTNKTYPTSFYLEEISSVISKIPKADLYILEKSGLSIQNTSLLPILLHFLITEAMLYALLNKTFAEDGQHRVLSINRNAVGKHFDLMIGDTRTSGRELVKQFLSESVLKERPRVFFPQDLLVQYRQKVVKSSYRIEELYDSLLQAVAFYELVFGKDSELKC</sequence>
<accession>Q5SSK3</accession>
<reference key="1">
    <citation type="journal article" date="2005" name="Science">
        <title>The transcriptional landscape of the mammalian genome.</title>
        <authorList>
            <person name="Carninci P."/>
            <person name="Kasukawa T."/>
            <person name="Katayama S."/>
            <person name="Gough J."/>
            <person name="Frith M.C."/>
            <person name="Maeda N."/>
            <person name="Oyama R."/>
            <person name="Ravasi T."/>
            <person name="Lenhard B."/>
            <person name="Wells C."/>
            <person name="Kodzius R."/>
            <person name="Shimokawa K."/>
            <person name="Bajic V.B."/>
            <person name="Brenner S.E."/>
            <person name="Batalov S."/>
            <person name="Forrest A.R."/>
            <person name="Zavolan M."/>
            <person name="Davis M.J."/>
            <person name="Wilming L.G."/>
            <person name="Aidinis V."/>
            <person name="Allen J.E."/>
            <person name="Ambesi-Impiombato A."/>
            <person name="Apweiler R."/>
            <person name="Aturaliya R.N."/>
            <person name="Bailey T.L."/>
            <person name="Bansal M."/>
            <person name="Baxter L."/>
            <person name="Beisel K.W."/>
            <person name="Bersano T."/>
            <person name="Bono H."/>
            <person name="Chalk A.M."/>
            <person name="Chiu K.P."/>
            <person name="Choudhary V."/>
            <person name="Christoffels A."/>
            <person name="Clutterbuck D.R."/>
            <person name="Crowe M.L."/>
            <person name="Dalla E."/>
            <person name="Dalrymple B.P."/>
            <person name="de Bono B."/>
            <person name="Della Gatta G."/>
            <person name="di Bernardo D."/>
            <person name="Down T."/>
            <person name="Engstrom P."/>
            <person name="Fagiolini M."/>
            <person name="Faulkner G."/>
            <person name="Fletcher C.F."/>
            <person name="Fukushima T."/>
            <person name="Furuno M."/>
            <person name="Futaki S."/>
            <person name="Gariboldi M."/>
            <person name="Georgii-Hemming P."/>
            <person name="Gingeras T.R."/>
            <person name="Gojobori T."/>
            <person name="Green R.E."/>
            <person name="Gustincich S."/>
            <person name="Harbers M."/>
            <person name="Hayashi Y."/>
            <person name="Hensch T.K."/>
            <person name="Hirokawa N."/>
            <person name="Hill D."/>
            <person name="Huminiecki L."/>
            <person name="Iacono M."/>
            <person name="Ikeo K."/>
            <person name="Iwama A."/>
            <person name="Ishikawa T."/>
            <person name="Jakt M."/>
            <person name="Kanapin A."/>
            <person name="Katoh M."/>
            <person name="Kawasawa Y."/>
            <person name="Kelso J."/>
            <person name="Kitamura H."/>
            <person name="Kitano H."/>
            <person name="Kollias G."/>
            <person name="Krishnan S.P."/>
            <person name="Kruger A."/>
            <person name="Kummerfeld S.K."/>
            <person name="Kurochkin I.V."/>
            <person name="Lareau L.F."/>
            <person name="Lazarevic D."/>
            <person name="Lipovich L."/>
            <person name="Liu J."/>
            <person name="Liuni S."/>
            <person name="McWilliam S."/>
            <person name="Madan Babu M."/>
            <person name="Madera M."/>
            <person name="Marchionni L."/>
            <person name="Matsuda H."/>
            <person name="Matsuzawa S."/>
            <person name="Miki H."/>
            <person name="Mignone F."/>
            <person name="Miyake S."/>
            <person name="Morris K."/>
            <person name="Mottagui-Tabar S."/>
            <person name="Mulder N."/>
            <person name="Nakano N."/>
            <person name="Nakauchi H."/>
            <person name="Ng P."/>
            <person name="Nilsson R."/>
            <person name="Nishiguchi S."/>
            <person name="Nishikawa S."/>
            <person name="Nori F."/>
            <person name="Ohara O."/>
            <person name="Okazaki Y."/>
            <person name="Orlando V."/>
            <person name="Pang K.C."/>
            <person name="Pavan W.J."/>
            <person name="Pavesi G."/>
            <person name="Pesole G."/>
            <person name="Petrovsky N."/>
            <person name="Piazza S."/>
            <person name="Reed J."/>
            <person name="Reid J.F."/>
            <person name="Ring B.Z."/>
            <person name="Ringwald M."/>
            <person name="Rost B."/>
            <person name="Ruan Y."/>
            <person name="Salzberg S.L."/>
            <person name="Sandelin A."/>
            <person name="Schneider C."/>
            <person name="Schoenbach C."/>
            <person name="Sekiguchi K."/>
            <person name="Semple C.A."/>
            <person name="Seno S."/>
            <person name="Sessa L."/>
            <person name="Sheng Y."/>
            <person name="Shibata Y."/>
            <person name="Shimada H."/>
            <person name="Shimada K."/>
            <person name="Silva D."/>
            <person name="Sinclair B."/>
            <person name="Sperling S."/>
            <person name="Stupka E."/>
            <person name="Sugiura K."/>
            <person name="Sultana R."/>
            <person name="Takenaka Y."/>
            <person name="Taki K."/>
            <person name="Tammoja K."/>
            <person name="Tan S.L."/>
            <person name="Tang S."/>
            <person name="Taylor M.S."/>
            <person name="Tegner J."/>
            <person name="Teichmann S.A."/>
            <person name="Ueda H.R."/>
            <person name="van Nimwegen E."/>
            <person name="Verardo R."/>
            <person name="Wei C.L."/>
            <person name="Yagi K."/>
            <person name="Yamanishi H."/>
            <person name="Zabarovsky E."/>
            <person name="Zhu S."/>
            <person name="Zimmer A."/>
            <person name="Hide W."/>
            <person name="Bult C."/>
            <person name="Grimmond S.M."/>
            <person name="Teasdale R.D."/>
            <person name="Liu E.T."/>
            <person name="Brusic V."/>
            <person name="Quackenbush J."/>
            <person name="Wahlestedt C."/>
            <person name="Mattick J.S."/>
            <person name="Hume D.A."/>
            <person name="Kai C."/>
            <person name="Sasaki D."/>
            <person name="Tomaru Y."/>
            <person name="Fukuda S."/>
            <person name="Kanamori-Katayama M."/>
            <person name="Suzuki M."/>
            <person name="Aoki J."/>
            <person name="Arakawa T."/>
            <person name="Iida J."/>
            <person name="Imamura K."/>
            <person name="Itoh M."/>
            <person name="Kato T."/>
            <person name="Kawaji H."/>
            <person name="Kawagashira N."/>
            <person name="Kawashima T."/>
            <person name="Kojima M."/>
            <person name="Kondo S."/>
            <person name="Konno H."/>
            <person name="Nakano K."/>
            <person name="Ninomiya N."/>
            <person name="Nishio T."/>
            <person name="Okada M."/>
            <person name="Plessy C."/>
            <person name="Shibata K."/>
            <person name="Shiraki T."/>
            <person name="Suzuki S."/>
            <person name="Tagami M."/>
            <person name="Waki K."/>
            <person name="Watahiki A."/>
            <person name="Okamura-Oho Y."/>
            <person name="Suzuki H."/>
            <person name="Kawai J."/>
            <person name="Hayashizaki Y."/>
        </authorList>
    </citation>
    <scope>NUCLEOTIDE SEQUENCE [LARGE SCALE MRNA]</scope>
    <source>
        <strain>C57BL/6J</strain>
        <tissue>Stomach</tissue>
    </source>
</reference>
<reference key="2">
    <citation type="journal article" date="2009" name="PLoS Biol.">
        <title>Lineage-specific biology revealed by a finished genome assembly of the mouse.</title>
        <authorList>
            <person name="Church D.M."/>
            <person name="Goodstadt L."/>
            <person name="Hillier L.W."/>
            <person name="Zody M.C."/>
            <person name="Goldstein S."/>
            <person name="She X."/>
            <person name="Bult C.J."/>
            <person name="Agarwala R."/>
            <person name="Cherry J.L."/>
            <person name="DiCuccio M."/>
            <person name="Hlavina W."/>
            <person name="Kapustin Y."/>
            <person name="Meric P."/>
            <person name="Maglott D."/>
            <person name="Birtle Z."/>
            <person name="Marques A.C."/>
            <person name="Graves T."/>
            <person name="Zhou S."/>
            <person name="Teague B."/>
            <person name="Potamousis K."/>
            <person name="Churas C."/>
            <person name="Place M."/>
            <person name="Herschleb J."/>
            <person name="Runnheim R."/>
            <person name="Forrest D."/>
            <person name="Amos-Landgraf J."/>
            <person name="Schwartz D.C."/>
            <person name="Cheng Z."/>
            <person name="Lindblad-Toh K."/>
            <person name="Eichler E.E."/>
            <person name="Ponting C.P."/>
        </authorList>
    </citation>
    <scope>NUCLEOTIDE SEQUENCE [LARGE SCALE GENOMIC DNA]</scope>
    <source>
        <strain>C57BL/6J</strain>
    </source>
</reference>
<reference key="3">
    <citation type="journal article" date="2010" name="Cell">
        <title>A tissue-specific atlas of mouse protein phosphorylation and expression.</title>
        <authorList>
            <person name="Huttlin E.L."/>
            <person name="Jedrychowski M.P."/>
            <person name="Elias J.E."/>
            <person name="Goswami T."/>
            <person name="Rad R."/>
            <person name="Beausoleil S.A."/>
            <person name="Villen J."/>
            <person name="Haas W."/>
            <person name="Sowa M.E."/>
            <person name="Gygi S.P."/>
        </authorList>
    </citation>
    <scope>IDENTIFICATION BY MASS SPECTROMETRY [LARGE SCALE ANALYSIS]</scope>
    <source>
        <tissue>Heart</tissue>
        <tissue>Kidney</tissue>
    </source>
</reference>
<proteinExistence type="evidence at protein level"/>
<gene>
    <name type="primary">Tefm</name>
</gene>
<keyword id="KW-0496">Mitochondrion</keyword>
<keyword id="KW-1135">Mitochondrion nucleoid</keyword>
<keyword id="KW-1185">Reference proteome</keyword>
<keyword id="KW-0804">Transcription</keyword>
<keyword id="KW-0805">Transcription regulation</keyword>
<keyword id="KW-0809">Transit peptide</keyword>